<name>PROB_NOVAD</name>
<reference key="1">
    <citation type="submission" date="2006-01" db="EMBL/GenBank/DDBJ databases">
        <title>Complete sequence of Novosphingobium aromaticivorans DSM 12444.</title>
        <authorList>
            <consortium name="US DOE Joint Genome Institute"/>
            <person name="Copeland A."/>
            <person name="Lucas S."/>
            <person name="Lapidus A."/>
            <person name="Barry K."/>
            <person name="Detter J.C."/>
            <person name="Glavina T."/>
            <person name="Hammon N."/>
            <person name="Israni S."/>
            <person name="Pitluck S."/>
            <person name="Chain P."/>
            <person name="Malfatti S."/>
            <person name="Shin M."/>
            <person name="Vergez L."/>
            <person name="Schmutz J."/>
            <person name="Larimer F."/>
            <person name="Land M."/>
            <person name="Kyrpides N."/>
            <person name="Ivanova N."/>
            <person name="Fredrickson J."/>
            <person name="Balkwill D."/>
            <person name="Romine M.F."/>
            <person name="Richardson P."/>
        </authorList>
    </citation>
    <scope>NUCLEOTIDE SEQUENCE [LARGE SCALE GENOMIC DNA]</scope>
    <source>
        <strain>ATCC 700278 / DSM 12444 / CCUG 56034 / CIP 105152 / NBRC 16084 / F199</strain>
    </source>
</reference>
<dbReference type="EC" id="2.7.2.11" evidence="1"/>
<dbReference type="EMBL" id="CP000248">
    <property type="protein sequence ID" value="ABD25591.1"/>
    <property type="molecule type" value="Genomic_DNA"/>
</dbReference>
<dbReference type="RefSeq" id="WP_011444805.1">
    <property type="nucleotide sequence ID" value="NC_007794.1"/>
</dbReference>
<dbReference type="SMR" id="Q2G982"/>
<dbReference type="STRING" id="279238.Saro_1146"/>
<dbReference type="KEGG" id="nar:Saro_1146"/>
<dbReference type="eggNOG" id="COG0263">
    <property type="taxonomic scope" value="Bacteria"/>
</dbReference>
<dbReference type="HOGENOM" id="CLU_025400_2_0_5"/>
<dbReference type="UniPathway" id="UPA00098">
    <property type="reaction ID" value="UER00359"/>
</dbReference>
<dbReference type="Proteomes" id="UP000009134">
    <property type="component" value="Chromosome"/>
</dbReference>
<dbReference type="GO" id="GO:0005829">
    <property type="term" value="C:cytosol"/>
    <property type="evidence" value="ECO:0007669"/>
    <property type="project" value="TreeGrafter"/>
</dbReference>
<dbReference type="GO" id="GO:0005524">
    <property type="term" value="F:ATP binding"/>
    <property type="evidence" value="ECO:0007669"/>
    <property type="project" value="UniProtKB-KW"/>
</dbReference>
<dbReference type="GO" id="GO:0004349">
    <property type="term" value="F:glutamate 5-kinase activity"/>
    <property type="evidence" value="ECO:0007669"/>
    <property type="project" value="UniProtKB-UniRule"/>
</dbReference>
<dbReference type="GO" id="GO:0003723">
    <property type="term" value="F:RNA binding"/>
    <property type="evidence" value="ECO:0007669"/>
    <property type="project" value="InterPro"/>
</dbReference>
<dbReference type="GO" id="GO:0055129">
    <property type="term" value="P:L-proline biosynthetic process"/>
    <property type="evidence" value="ECO:0007669"/>
    <property type="project" value="UniProtKB-UniRule"/>
</dbReference>
<dbReference type="CDD" id="cd04242">
    <property type="entry name" value="AAK_G5K_ProB"/>
    <property type="match status" value="1"/>
</dbReference>
<dbReference type="CDD" id="cd21157">
    <property type="entry name" value="PUA_G5K"/>
    <property type="match status" value="1"/>
</dbReference>
<dbReference type="FunFam" id="3.40.1160.10:FF:000006">
    <property type="entry name" value="Glutamate 5-kinase"/>
    <property type="match status" value="1"/>
</dbReference>
<dbReference type="Gene3D" id="3.40.1160.10">
    <property type="entry name" value="Acetylglutamate kinase-like"/>
    <property type="match status" value="1"/>
</dbReference>
<dbReference type="Gene3D" id="2.30.130.10">
    <property type="entry name" value="PUA domain"/>
    <property type="match status" value="1"/>
</dbReference>
<dbReference type="HAMAP" id="MF_00456">
    <property type="entry name" value="ProB"/>
    <property type="match status" value="1"/>
</dbReference>
<dbReference type="InterPro" id="IPR036393">
    <property type="entry name" value="AceGlu_kinase-like_sf"/>
</dbReference>
<dbReference type="InterPro" id="IPR001048">
    <property type="entry name" value="Asp/Glu/Uridylate_kinase"/>
</dbReference>
<dbReference type="InterPro" id="IPR041739">
    <property type="entry name" value="G5K_ProB"/>
</dbReference>
<dbReference type="InterPro" id="IPR001057">
    <property type="entry name" value="Glu/AcGlu_kinase"/>
</dbReference>
<dbReference type="InterPro" id="IPR011529">
    <property type="entry name" value="Glu_5kinase"/>
</dbReference>
<dbReference type="InterPro" id="IPR005715">
    <property type="entry name" value="Glu_5kinase/COase_Synthase"/>
</dbReference>
<dbReference type="InterPro" id="IPR019797">
    <property type="entry name" value="Glutamate_5-kinase_CS"/>
</dbReference>
<dbReference type="InterPro" id="IPR002478">
    <property type="entry name" value="PUA"/>
</dbReference>
<dbReference type="InterPro" id="IPR015947">
    <property type="entry name" value="PUA-like_sf"/>
</dbReference>
<dbReference type="InterPro" id="IPR036974">
    <property type="entry name" value="PUA_sf"/>
</dbReference>
<dbReference type="NCBIfam" id="TIGR01027">
    <property type="entry name" value="proB"/>
    <property type="match status" value="1"/>
</dbReference>
<dbReference type="PANTHER" id="PTHR43654">
    <property type="entry name" value="GLUTAMATE 5-KINASE"/>
    <property type="match status" value="1"/>
</dbReference>
<dbReference type="PANTHER" id="PTHR43654:SF1">
    <property type="entry name" value="ISOPENTENYL PHOSPHATE KINASE"/>
    <property type="match status" value="1"/>
</dbReference>
<dbReference type="Pfam" id="PF00696">
    <property type="entry name" value="AA_kinase"/>
    <property type="match status" value="1"/>
</dbReference>
<dbReference type="Pfam" id="PF01472">
    <property type="entry name" value="PUA"/>
    <property type="match status" value="1"/>
</dbReference>
<dbReference type="PIRSF" id="PIRSF000729">
    <property type="entry name" value="GK"/>
    <property type="match status" value="1"/>
</dbReference>
<dbReference type="PRINTS" id="PR00474">
    <property type="entry name" value="GLU5KINASE"/>
</dbReference>
<dbReference type="SMART" id="SM00359">
    <property type="entry name" value="PUA"/>
    <property type="match status" value="1"/>
</dbReference>
<dbReference type="SUPFAM" id="SSF53633">
    <property type="entry name" value="Carbamate kinase-like"/>
    <property type="match status" value="1"/>
</dbReference>
<dbReference type="SUPFAM" id="SSF88697">
    <property type="entry name" value="PUA domain-like"/>
    <property type="match status" value="1"/>
</dbReference>
<dbReference type="PROSITE" id="PS00902">
    <property type="entry name" value="GLUTAMATE_5_KINASE"/>
    <property type="match status" value="1"/>
</dbReference>
<dbReference type="PROSITE" id="PS50890">
    <property type="entry name" value="PUA"/>
    <property type="match status" value="1"/>
</dbReference>
<accession>Q2G982</accession>
<gene>
    <name evidence="1" type="primary">proB</name>
    <name type="ordered locus">Saro_1146</name>
</gene>
<evidence type="ECO:0000255" key="1">
    <source>
        <dbReference type="HAMAP-Rule" id="MF_00456"/>
    </source>
</evidence>
<protein>
    <recommendedName>
        <fullName evidence="1">Glutamate 5-kinase</fullName>
        <ecNumber evidence="1">2.7.2.11</ecNumber>
    </recommendedName>
    <alternativeName>
        <fullName evidence="1">Gamma-glutamyl kinase</fullName>
        <shortName evidence="1">GK</shortName>
    </alternativeName>
</protein>
<comment type="function">
    <text evidence="1">Catalyzes the transfer of a phosphate group to glutamate to form L-glutamate 5-phosphate.</text>
</comment>
<comment type="catalytic activity">
    <reaction evidence="1">
        <text>L-glutamate + ATP = L-glutamyl 5-phosphate + ADP</text>
        <dbReference type="Rhea" id="RHEA:14877"/>
        <dbReference type="ChEBI" id="CHEBI:29985"/>
        <dbReference type="ChEBI" id="CHEBI:30616"/>
        <dbReference type="ChEBI" id="CHEBI:58274"/>
        <dbReference type="ChEBI" id="CHEBI:456216"/>
        <dbReference type="EC" id="2.7.2.11"/>
    </reaction>
</comment>
<comment type="pathway">
    <text evidence="1">Amino-acid biosynthesis; L-proline biosynthesis; L-glutamate 5-semialdehyde from L-glutamate: step 1/2.</text>
</comment>
<comment type="subcellular location">
    <subcellularLocation>
        <location evidence="1">Cytoplasm</location>
    </subcellularLocation>
</comment>
<comment type="similarity">
    <text evidence="1">Belongs to the glutamate 5-kinase family.</text>
</comment>
<feature type="chain" id="PRO_0000252989" description="Glutamate 5-kinase">
    <location>
        <begin position="1"/>
        <end position="377"/>
    </location>
</feature>
<feature type="domain" description="PUA" evidence="1">
    <location>
        <begin position="286"/>
        <end position="363"/>
    </location>
</feature>
<feature type="binding site" evidence="1">
    <location>
        <position position="21"/>
    </location>
    <ligand>
        <name>ATP</name>
        <dbReference type="ChEBI" id="CHEBI:30616"/>
    </ligand>
</feature>
<feature type="binding site" evidence="1">
    <location>
        <position position="61"/>
    </location>
    <ligand>
        <name>substrate</name>
    </ligand>
</feature>
<feature type="binding site" evidence="1">
    <location>
        <position position="149"/>
    </location>
    <ligand>
        <name>substrate</name>
    </ligand>
</feature>
<feature type="binding site" evidence="1">
    <location>
        <position position="161"/>
    </location>
    <ligand>
        <name>substrate</name>
    </ligand>
</feature>
<feature type="binding site" evidence="1">
    <location>
        <begin position="181"/>
        <end position="182"/>
    </location>
    <ligand>
        <name>ATP</name>
        <dbReference type="ChEBI" id="CHEBI:30616"/>
    </ligand>
</feature>
<feature type="binding site" evidence="1">
    <location>
        <begin position="223"/>
        <end position="229"/>
    </location>
    <ligand>
        <name>ATP</name>
        <dbReference type="ChEBI" id="CHEBI:30616"/>
    </ligand>
</feature>
<sequence>MKISQLAQLTQASTCPRLVVKVGSALLVGKDGEPRREWLSALVSEIAAMRAAGQEVIVVSSGAIALGARKLGLAKGGRGSLSDAQAAASVGQIALAGLWAELLAQHGLTAAQILLTLEDLEDRRRYLNVTATLGTLLAACAVPVINENDSVATQEIRFGDNDRLAARVGQAAGASGVLLLSDIDGLYDRDPRQPGATRIPVVKGVTPEIHAMATGGSSSGLGSGGMTSKLQAAEIAELAGMALAIIDGQPVAPIAAAMGAARGTLFLPRGRKQARKAWLGGRMRMRGSVQVDAGAAAALARGSSLLAAGVTEVDGDFQRGDAIAVLGPDGRTLARGLSEYDAAECARLKGRHSREHEELLGYAPRSALIHRDQMVLL</sequence>
<keyword id="KW-0028">Amino-acid biosynthesis</keyword>
<keyword id="KW-0067">ATP-binding</keyword>
<keyword id="KW-0963">Cytoplasm</keyword>
<keyword id="KW-0418">Kinase</keyword>
<keyword id="KW-0547">Nucleotide-binding</keyword>
<keyword id="KW-0641">Proline biosynthesis</keyword>
<keyword id="KW-1185">Reference proteome</keyword>
<keyword id="KW-0808">Transferase</keyword>
<organism>
    <name type="scientific">Novosphingobium aromaticivorans (strain ATCC 700278 / DSM 12444 / CCUG 56034 / CIP 105152 / NBRC 16084 / F199)</name>
    <dbReference type="NCBI Taxonomy" id="279238"/>
    <lineage>
        <taxon>Bacteria</taxon>
        <taxon>Pseudomonadati</taxon>
        <taxon>Pseudomonadota</taxon>
        <taxon>Alphaproteobacteria</taxon>
        <taxon>Sphingomonadales</taxon>
        <taxon>Sphingomonadaceae</taxon>
        <taxon>Novosphingobium</taxon>
    </lineage>
</organism>
<proteinExistence type="inferred from homology"/>